<keyword id="KW-0002">3D-structure</keyword>
<keyword id="KW-0072">Autophagy</keyword>
<keyword id="KW-0968">Cytoplasmic vesicle</keyword>
<keyword id="KW-0449">Lipoprotein</keyword>
<keyword id="KW-0472">Membrane</keyword>
<keyword id="KW-0653">Protein transport</keyword>
<keyword id="KW-1185">Reference proteome</keyword>
<keyword id="KW-0813">Transport</keyword>
<keyword id="KW-0833">Ubl conjugation pathway</keyword>
<keyword id="KW-0926">Vacuole</keyword>
<comment type="function">
    <text evidence="1 2 3 4 6">Ubiquitin-like modifier involved in autophagosome formation. With atg4, mediates the delivery of the autophagosomes to the vacuole via the microtubule cytoskeleton. Required for selective autophagic degradation of the nucleus (nucleophagy) as well as for mitophagy which contributes to regulate mitochondrial quantity and quality by eliminating the mitochondria to a basal level to fulfill cellular energy requirements and preventing excess ROS production. Participates also in membrane fusion events that take place in the early secretory pathway. Also involved in endoplasmic reticulum-specific autophagic process and is essential for the survival of cells subjected to severe ER stress. The atg8-PE conjugate mediates tethering between adjacent membranes and stimulates membrane hemifusion, leading to expansion of the autophagosomal membrane during autophagy (By similarity). Recruits atg38 of the autophagy-specific vps34 PI3-kinase complex I to the phagophore assembly site, to establish a positive feedback loop for recruitment of phagophore assembly proteins, including atg8 (PubMed:31941401). Contributes to the maintenance of cell viability under conditions of nitrogen-depletion. Plays a role in meiosis and sporulation and contributes to oxidative stress resistance (PubMed:17295836, PubMed:19778961, PubMed:20070859).</text>
</comment>
<comment type="function">
    <text evidence="5">Has a lipidation-independent vacuolar function to facilitate the degradation of vacuolar integral membrane proteins during early-stationary vacuole turnover (EVT) when cells enter stationary phase.</text>
</comment>
<comment type="subunit">
    <text evidence="6 7">Interacts with atg43 (via N-terminal atg8 interacting motif); the interaction is direct (PubMed:33138913). Interacts with atg38 (via AIM motif); the interaction is direct and leads to recruitment of the autophagy-specific vps34 PI3-kinase complex I to the phagophore assembly site (PubMed:31941401). Interacts with hfl1 (PubMed:33138913).</text>
</comment>
<comment type="subcellular location">
    <subcellularLocation>
        <location evidence="1">Cytoplasmic vesicle</location>
        <location evidence="1">Autophagosome membrane</location>
        <topology evidence="1">Lipid-anchor</topology>
    </subcellularLocation>
    <subcellularLocation>
        <location evidence="7">Vacuole membrane</location>
        <topology evidence="7">Peripheral membrane protein</topology>
    </subcellularLocation>
</comment>
<comment type="PTM">
    <text evidence="1">The C-terminal 5 residues are removed to expose Gly-116 at the C-terminus. The C-terminal Gly is then amidated with phosphatidylethanolamine by an activating system similar to that for ubiquitin.</text>
</comment>
<comment type="similarity">
    <text evidence="8">Belongs to the ATG8 family.</text>
</comment>
<evidence type="ECO:0000250" key="1">
    <source>
        <dbReference type="UniProtKB" id="P38182"/>
    </source>
</evidence>
<evidence type="ECO:0000269" key="2">
    <source>
    </source>
</evidence>
<evidence type="ECO:0000269" key="3">
    <source>
    </source>
</evidence>
<evidence type="ECO:0000269" key="4">
    <source>
    </source>
</evidence>
<evidence type="ECO:0000269" key="5">
    <source>
    </source>
</evidence>
<evidence type="ECO:0000269" key="6">
    <source>
    </source>
</evidence>
<evidence type="ECO:0000269" key="7">
    <source>
    </source>
</evidence>
<evidence type="ECO:0000305" key="8"/>
<evidence type="ECO:0007744" key="9">
    <source>
        <dbReference type="PDB" id="6AAF"/>
    </source>
</evidence>
<evidence type="ECO:0007829" key="10">
    <source>
        <dbReference type="PDB" id="6AAF"/>
    </source>
</evidence>
<feature type="chain" id="PRO_0000017236" description="Autophagy-related protein 8">
    <location>
        <begin position="1"/>
        <end position="116"/>
    </location>
</feature>
<feature type="propeptide" id="PRO_0000017237" description="Removed in mature form" evidence="1">
    <location>
        <begin position="117"/>
        <end position="121"/>
    </location>
</feature>
<feature type="site" description="Cleavage; by atg4" evidence="1">
    <location>
        <begin position="116"/>
        <end position="117"/>
    </location>
</feature>
<feature type="lipid moiety-binding region" description="Phosphatidylethanolamine amidated glycine" evidence="1">
    <location>
        <position position="116"/>
    </location>
</feature>
<feature type="mutagenesis site" description="Impairs interaction with atg38 and leads to defective autophagy; when associated with A-67." evidence="6">
    <original>P</original>
    <variation>A</variation>
    <location>
        <position position="52"/>
    </location>
</feature>
<feature type="mutagenesis site" description="Impairs interaction with atg38 and leads to defective autophagy; when associated with A-52." evidence="6">
    <original>R</original>
    <variation>A</variation>
    <location>
        <position position="67"/>
    </location>
</feature>
<feature type="helix" evidence="10">
    <location>
        <begin position="4"/>
        <end position="8"/>
    </location>
</feature>
<feature type="helix" evidence="10">
    <location>
        <begin position="11"/>
        <end position="24"/>
    </location>
</feature>
<feature type="strand" evidence="10">
    <location>
        <begin position="28"/>
        <end position="35"/>
    </location>
</feature>
<feature type="strand" evidence="10">
    <location>
        <begin position="48"/>
        <end position="52"/>
    </location>
</feature>
<feature type="helix" evidence="10">
    <location>
        <begin position="57"/>
        <end position="68"/>
    </location>
</feature>
<feature type="strand" evidence="10">
    <location>
        <begin position="77"/>
        <end position="80"/>
    </location>
</feature>
<feature type="helix" evidence="10">
    <location>
        <begin position="91"/>
        <end position="98"/>
    </location>
</feature>
<feature type="strand" evidence="10">
    <location>
        <begin position="105"/>
        <end position="111"/>
    </location>
</feature>
<accession>O94272</accession>
<organism>
    <name type="scientific">Schizosaccharomyces pombe (strain 972 / ATCC 24843)</name>
    <name type="common">Fission yeast</name>
    <dbReference type="NCBI Taxonomy" id="284812"/>
    <lineage>
        <taxon>Eukaryota</taxon>
        <taxon>Fungi</taxon>
        <taxon>Dikarya</taxon>
        <taxon>Ascomycota</taxon>
        <taxon>Taphrinomycotina</taxon>
        <taxon>Schizosaccharomycetes</taxon>
        <taxon>Schizosaccharomycetales</taxon>
        <taxon>Schizosaccharomycetaceae</taxon>
        <taxon>Schizosaccharomyces</taxon>
    </lineage>
</organism>
<reference key="1">
    <citation type="journal article" date="2002" name="Nature">
        <title>The genome sequence of Schizosaccharomyces pombe.</title>
        <authorList>
            <person name="Wood V."/>
            <person name="Gwilliam R."/>
            <person name="Rajandream M.A."/>
            <person name="Lyne M.H."/>
            <person name="Lyne R."/>
            <person name="Stewart A."/>
            <person name="Sgouros J.G."/>
            <person name="Peat N."/>
            <person name="Hayles J."/>
            <person name="Baker S.G."/>
            <person name="Basham D."/>
            <person name="Bowman S."/>
            <person name="Brooks K."/>
            <person name="Brown D."/>
            <person name="Brown S."/>
            <person name="Chillingworth T."/>
            <person name="Churcher C.M."/>
            <person name="Collins M."/>
            <person name="Connor R."/>
            <person name="Cronin A."/>
            <person name="Davis P."/>
            <person name="Feltwell T."/>
            <person name="Fraser A."/>
            <person name="Gentles S."/>
            <person name="Goble A."/>
            <person name="Hamlin N."/>
            <person name="Harris D.E."/>
            <person name="Hidalgo J."/>
            <person name="Hodgson G."/>
            <person name="Holroyd S."/>
            <person name="Hornsby T."/>
            <person name="Howarth S."/>
            <person name="Huckle E.J."/>
            <person name="Hunt S."/>
            <person name="Jagels K."/>
            <person name="James K.D."/>
            <person name="Jones L."/>
            <person name="Jones M."/>
            <person name="Leather S."/>
            <person name="McDonald S."/>
            <person name="McLean J."/>
            <person name="Mooney P."/>
            <person name="Moule S."/>
            <person name="Mungall K.L."/>
            <person name="Murphy L.D."/>
            <person name="Niblett D."/>
            <person name="Odell C."/>
            <person name="Oliver K."/>
            <person name="O'Neil S."/>
            <person name="Pearson D."/>
            <person name="Quail M.A."/>
            <person name="Rabbinowitsch E."/>
            <person name="Rutherford K.M."/>
            <person name="Rutter S."/>
            <person name="Saunders D."/>
            <person name="Seeger K."/>
            <person name="Sharp S."/>
            <person name="Skelton J."/>
            <person name="Simmonds M.N."/>
            <person name="Squares R."/>
            <person name="Squares S."/>
            <person name="Stevens K."/>
            <person name="Taylor K."/>
            <person name="Taylor R.G."/>
            <person name="Tivey A."/>
            <person name="Walsh S.V."/>
            <person name="Warren T."/>
            <person name="Whitehead S."/>
            <person name="Woodward J.R."/>
            <person name="Volckaert G."/>
            <person name="Aert R."/>
            <person name="Robben J."/>
            <person name="Grymonprez B."/>
            <person name="Weltjens I."/>
            <person name="Vanstreels E."/>
            <person name="Rieger M."/>
            <person name="Schaefer M."/>
            <person name="Mueller-Auer S."/>
            <person name="Gabel C."/>
            <person name="Fuchs M."/>
            <person name="Duesterhoeft A."/>
            <person name="Fritzc C."/>
            <person name="Holzer E."/>
            <person name="Moestl D."/>
            <person name="Hilbert H."/>
            <person name="Borzym K."/>
            <person name="Langer I."/>
            <person name="Beck A."/>
            <person name="Lehrach H."/>
            <person name="Reinhardt R."/>
            <person name="Pohl T.M."/>
            <person name="Eger P."/>
            <person name="Zimmermann W."/>
            <person name="Wedler H."/>
            <person name="Wambutt R."/>
            <person name="Purnelle B."/>
            <person name="Goffeau A."/>
            <person name="Cadieu E."/>
            <person name="Dreano S."/>
            <person name="Gloux S."/>
            <person name="Lelaure V."/>
            <person name="Mottier S."/>
            <person name="Galibert F."/>
            <person name="Aves S.J."/>
            <person name="Xiang Z."/>
            <person name="Hunt C."/>
            <person name="Moore K."/>
            <person name="Hurst S.M."/>
            <person name="Lucas M."/>
            <person name="Rochet M."/>
            <person name="Gaillardin C."/>
            <person name="Tallada V.A."/>
            <person name="Garzon A."/>
            <person name="Thode G."/>
            <person name="Daga R.R."/>
            <person name="Cruzado L."/>
            <person name="Jimenez J."/>
            <person name="Sanchez M."/>
            <person name="del Rey F."/>
            <person name="Benito J."/>
            <person name="Dominguez A."/>
            <person name="Revuelta J.L."/>
            <person name="Moreno S."/>
            <person name="Armstrong J."/>
            <person name="Forsburg S.L."/>
            <person name="Cerutti L."/>
            <person name="Lowe T."/>
            <person name="McCombie W.R."/>
            <person name="Paulsen I."/>
            <person name="Potashkin J."/>
            <person name="Shpakovski G.V."/>
            <person name="Ussery D."/>
            <person name="Barrell B.G."/>
            <person name="Nurse P."/>
        </authorList>
    </citation>
    <scope>NUCLEOTIDE SEQUENCE [LARGE SCALE GENOMIC DNA]</scope>
    <source>
        <strain>972 / ATCC 24843</strain>
    </source>
</reference>
<reference key="2">
    <citation type="journal article" date="2007" name="Genes Cells">
        <title>Fission yeast autophagy induced by nitrogen starvation generates a nitrogen source that drives adaptation processes.</title>
        <authorList>
            <person name="Kohda T.A."/>
            <person name="Tanaka K."/>
            <person name="Konomi M."/>
            <person name="Sato M."/>
            <person name="Osumi M."/>
            <person name="Yamamoto M."/>
        </authorList>
    </citation>
    <scope>FUNCTION</scope>
    <scope>SUBCELLULAR LOCATION</scope>
</reference>
<reference key="3">
    <citation type="journal article" date="2009" name="Microbiology">
        <title>Autophagy-deficient Schizosaccharomyces pombe mutants undergo partial sporulation during nitrogen starvation.</title>
        <authorList>
            <person name="Mukaiyama H."/>
            <person name="Kajiwara S."/>
            <person name="Hosomi A."/>
            <person name="Giga-Hama Y."/>
            <person name="Tanaka N."/>
            <person name="Nakamura T."/>
            <person name="Takegawa K."/>
        </authorList>
    </citation>
    <scope>FUNCTION</scope>
</reference>
<reference key="4">
    <citation type="journal article" date="2010" name="Genes Cells">
        <title>Fission yeast Vps1 and Atg8 contribute to oxidative stress resistance.</title>
        <authorList>
            <person name="Mikawa T."/>
            <person name="Kanoh J."/>
            <person name="Ishikawa F."/>
        </authorList>
    </citation>
    <scope>FUNCTION</scope>
</reference>
<reference key="5">
    <citation type="journal article" date="2013" name="PLoS Genet.">
        <title>Global analysis of fission yeast mating genes reveals new autophagy factors.</title>
        <authorList>
            <person name="Sun L.L."/>
            <person name="Li M."/>
            <person name="Suo F."/>
            <person name="Liu X.M."/>
            <person name="Shen E.Z."/>
            <person name="Yang B."/>
            <person name="Dong M.Q."/>
            <person name="He W.Z."/>
            <person name="Du L.L."/>
        </authorList>
    </citation>
    <scope>SUBCELLULAR LOCATION</scope>
</reference>
<reference key="6">
    <citation type="journal article" date="2020" name="Autophagy">
        <title>Atg38-Atg8 interaction in fission yeast establishes a positive feedback loop to promote autophagy.</title>
        <authorList>
            <person name="Yu Z.Q."/>
            <person name="Sun L.L."/>
            <person name="Jiang Z.D."/>
            <person name="Liu X.M."/>
            <person name="Zhao D."/>
            <person name="Wang H.T."/>
            <person name="He W.Z."/>
            <person name="Dong M.Q."/>
            <person name="Du L.L."/>
        </authorList>
    </citation>
    <scope>FUNCTION</scope>
    <scope>INTERACTION WITH ATG38</scope>
    <scope>MUTAGENESIS OF PRO-52 AND ARG-67</scope>
</reference>
<reference key="7">
    <citation type="journal article" date="2020" name="Elife">
        <title>Atg43 tethers isolation membranes to mitochondria to promote starvation-induced mitophagy in fission yeast.</title>
        <authorList>
            <person name="Fukuda T."/>
            <person name="Ebi Y."/>
            <person name="Saigusa T."/>
            <person name="Furukawa K."/>
            <person name="Yamashita S.I."/>
            <person name="Inoue K."/>
            <person name="Kobayashi D."/>
            <person name="Yoshida Y."/>
            <person name="Kanki T."/>
        </authorList>
    </citation>
    <scope>INTERACTION WITH ATG43</scope>
</reference>
<reference evidence="9" key="8">
    <citation type="journal article" date="2018" name="Elife">
        <title>Lipidation-independent vacuolar functions of Atg8 rely on its noncanonical interaction with a vacuole membrane protein.</title>
        <authorList>
            <person name="Liu X.M."/>
            <person name="Yamasaki A."/>
            <person name="Du X.M."/>
            <person name="Coffman V.C."/>
            <person name="Ohsumi Y."/>
            <person name="Nakatogawa H."/>
            <person name="Wu J.Q."/>
            <person name="Noda N.N."/>
            <person name="Du L.L."/>
        </authorList>
    </citation>
    <scope>X-RAY CRYSTALLOGRAPHY (2.20 ANGSTROMS) OF 1-116</scope>
    <scope>FUNCTION</scope>
    <scope>INTERACTION WITH HFL1</scope>
    <scope>SUBCELLULAR LOCATION</scope>
</reference>
<name>ATG8_SCHPO</name>
<gene>
    <name type="primary">atg8</name>
    <name type="ORF">SPBP8B7.24c</name>
</gene>
<dbReference type="EMBL" id="CU329671">
    <property type="protein sequence ID" value="CAA21809.1"/>
    <property type="molecule type" value="Genomic_DNA"/>
</dbReference>
<dbReference type="PIR" id="T40818">
    <property type="entry name" value="T40818"/>
</dbReference>
<dbReference type="RefSeq" id="NP_596531.1">
    <property type="nucleotide sequence ID" value="NM_001022452.2"/>
</dbReference>
<dbReference type="PDB" id="6AAF">
    <property type="method" value="X-ray"/>
    <property type="resolution" value="2.20 A"/>
    <property type="chains" value="A=1-116"/>
</dbReference>
<dbReference type="PDBsum" id="6AAF"/>
<dbReference type="SMR" id="O94272"/>
<dbReference type="BioGRID" id="277897">
    <property type="interactions" value="28"/>
</dbReference>
<dbReference type="FunCoup" id="O94272">
    <property type="interactions" value="319"/>
</dbReference>
<dbReference type="STRING" id="284812.O94272"/>
<dbReference type="iPTMnet" id="O94272"/>
<dbReference type="PaxDb" id="4896-SPBP8B7.24c.1"/>
<dbReference type="EnsemblFungi" id="SPBP8B7.24c.1">
    <property type="protein sequence ID" value="SPBP8B7.24c.1:pep"/>
    <property type="gene ID" value="SPBP8B7.24c"/>
</dbReference>
<dbReference type="GeneID" id="2541386"/>
<dbReference type="KEGG" id="spo:2541386"/>
<dbReference type="PomBase" id="SPBP8B7.24c">
    <property type="gene designation" value="atg8"/>
</dbReference>
<dbReference type="VEuPathDB" id="FungiDB:SPBP8B7.24c"/>
<dbReference type="eggNOG" id="KOG1654">
    <property type="taxonomic scope" value="Eukaryota"/>
</dbReference>
<dbReference type="HOGENOM" id="CLU_119276_0_1_1"/>
<dbReference type="InParanoid" id="O94272"/>
<dbReference type="OMA" id="AVYQEHK"/>
<dbReference type="PhylomeDB" id="O94272"/>
<dbReference type="Reactome" id="R-SPO-1632852">
    <property type="pathway name" value="Macroautophagy"/>
</dbReference>
<dbReference type="Reactome" id="R-SPO-8854214">
    <property type="pathway name" value="TBC/RABGAPs"/>
</dbReference>
<dbReference type="Reactome" id="R-SPO-8934903">
    <property type="pathway name" value="Receptor Mediated Mitophagy"/>
</dbReference>
<dbReference type="PRO" id="PR:O94272"/>
<dbReference type="Proteomes" id="UP000002485">
    <property type="component" value="Chromosome II"/>
</dbReference>
<dbReference type="GO" id="GO:0000421">
    <property type="term" value="C:autophagosome membrane"/>
    <property type="evidence" value="ECO:0000318"/>
    <property type="project" value="GO_Central"/>
</dbReference>
<dbReference type="GO" id="GO:0005737">
    <property type="term" value="C:cytoplasm"/>
    <property type="evidence" value="ECO:0000314"/>
    <property type="project" value="PomBase"/>
</dbReference>
<dbReference type="GO" id="GO:0031410">
    <property type="term" value="C:cytoplasmic vesicle"/>
    <property type="evidence" value="ECO:0007669"/>
    <property type="project" value="UniProtKB-KW"/>
</dbReference>
<dbReference type="GO" id="GO:0005829">
    <property type="term" value="C:cytosol"/>
    <property type="evidence" value="ECO:0000314"/>
    <property type="project" value="PomBase"/>
</dbReference>
<dbReference type="GO" id="GO:0000324">
    <property type="term" value="C:fungal-type vacuole"/>
    <property type="evidence" value="ECO:0000314"/>
    <property type="project" value="PomBase"/>
</dbReference>
<dbReference type="GO" id="GO:0000329">
    <property type="term" value="C:fungal-type vacuole membrane"/>
    <property type="evidence" value="ECO:0000314"/>
    <property type="project" value="PomBase"/>
</dbReference>
<dbReference type="GO" id="GO:0005634">
    <property type="term" value="C:nucleus"/>
    <property type="evidence" value="ECO:0007005"/>
    <property type="project" value="PomBase"/>
</dbReference>
<dbReference type="GO" id="GO:0000407">
    <property type="term" value="C:phagophore assembly site"/>
    <property type="evidence" value="ECO:0000314"/>
    <property type="project" value="PomBase"/>
</dbReference>
<dbReference type="GO" id="GO:0008429">
    <property type="term" value="F:phosphatidylethanolamine binding"/>
    <property type="evidence" value="ECO:0000318"/>
    <property type="project" value="GO_Central"/>
</dbReference>
<dbReference type="GO" id="GO:0000045">
    <property type="term" value="P:autophagosome assembly"/>
    <property type="evidence" value="ECO:0000318"/>
    <property type="project" value="GO_Central"/>
</dbReference>
<dbReference type="GO" id="GO:0097352">
    <property type="term" value="P:autophagosome maturation"/>
    <property type="evidence" value="ECO:0000318"/>
    <property type="project" value="GO_Central"/>
</dbReference>
<dbReference type="GO" id="GO:0006995">
    <property type="term" value="P:cellular response to nitrogen starvation"/>
    <property type="evidence" value="ECO:0000318"/>
    <property type="project" value="GO_Central"/>
</dbReference>
<dbReference type="GO" id="GO:0016236">
    <property type="term" value="P:macroautophagy"/>
    <property type="evidence" value="ECO:0000315"/>
    <property type="project" value="PomBase"/>
</dbReference>
<dbReference type="GO" id="GO:0061025">
    <property type="term" value="P:membrane fusion"/>
    <property type="evidence" value="ECO:0000266"/>
    <property type="project" value="PomBase"/>
</dbReference>
<dbReference type="GO" id="GO:0000423">
    <property type="term" value="P:mitophagy"/>
    <property type="evidence" value="ECO:0000318"/>
    <property type="project" value="GO_Central"/>
</dbReference>
<dbReference type="GO" id="GO:0015031">
    <property type="term" value="P:protein transport"/>
    <property type="evidence" value="ECO:0007669"/>
    <property type="project" value="UniProtKB-KW"/>
</dbReference>
<dbReference type="GO" id="GO:0007033">
    <property type="term" value="P:vacuole organization"/>
    <property type="evidence" value="ECO:0000315"/>
    <property type="project" value="PomBase"/>
</dbReference>
<dbReference type="CDD" id="cd16128">
    <property type="entry name" value="Ubl_ATG8"/>
    <property type="match status" value="1"/>
</dbReference>
<dbReference type="FunFam" id="3.10.20.90:FF:000010">
    <property type="entry name" value="Autophagy-related protein"/>
    <property type="match status" value="1"/>
</dbReference>
<dbReference type="Gene3D" id="3.10.20.90">
    <property type="entry name" value="Phosphatidylinositol 3-kinase Catalytic Subunit, Chain A, domain 1"/>
    <property type="match status" value="1"/>
</dbReference>
<dbReference type="InterPro" id="IPR004241">
    <property type="entry name" value="Atg8-like"/>
</dbReference>
<dbReference type="InterPro" id="IPR029071">
    <property type="entry name" value="Ubiquitin-like_domsf"/>
</dbReference>
<dbReference type="PANTHER" id="PTHR10969">
    <property type="entry name" value="MICROTUBULE-ASSOCIATED PROTEINS 1A/1B LIGHT CHAIN 3-RELATED"/>
    <property type="match status" value="1"/>
</dbReference>
<dbReference type="Pfam" id="PF02991">
    <property type="entry name" value="ATG8"/>
    <property type="match status" value="1"/>
</dbReference>
<dbReference type="SUPFAM" id="SSF54236">
    <property type="entry name" value="Ubiquitin-like"/>
    <property type="match status" value="1"/>
</dbReference>
<protein>
    <recommendedName>
        <fullName>Autophagy-related protein 8</fullName>
    </recommendedName>
    <alternativeName>
        <fullName>Autophagy-related ubiquitin-like modifier atg8</fullName>
    </alternativeName>
</protein>
<sequence length="121" mass="14155">MRSQFKDDFSFEKRKTESQRIREKYPDRIPVICEKVDKSDIAAIDKKKYLVPSDLTVGQFVYVIRKRIKLSPEKAIFIFIDEILPPTAALMSTIYEEHKSEDGFLYITYSGENTFGTVFPF</sequence>
<proteinExistence type="evidence at protein level"/>